<feature type="signal peptide" evidence="2">
    <location>
        <begin position="1"/>
        <end position="26"/>
    </location>
</feature>
<feature type="chain" id="PRO_0000390772" description="Disintegrin and metalloproteinase domain-containing protein B">
    <location>
        <begin position="27"/>
        <end position="785"/>
    </location>
</feature>
<feature type="topological domain" description="Extracellular" evidence="2">
    <location>
        <begin position="27"/>
        <end position="703"/>
    </location>
</feature>
<feature type="transmembrane region" description="Helical" evidence="2">
    <location>
        <begin position="704"/>
        <end position="724"/>
    </location>
</feature>
<feature type="topological domain" description="Cytoplasmic" evidence="2">
    <location>
        <begin position="725"/>
        <end position="785"/>
    </location>
</feature>
<feature type="domain" description="Peptidase M12B" evidence="4">
    <location>
        <begin position="279"/>
        <end position="507"/>
    </location>
</feature>
<feature type="domain" description="Disintegrin" evidence="3">
    <location>
        <begin position="516"/>
        <end position="605"/>
    </location>
</feature>
<feature type="region of interest" description="Disordered" evidence="5">
    <location>
        <begin position="737"/>
        <end position="785"/>
    </location>
</feature>
<feature type="compositionally biased region" description="Pro residues" evidence="5">
    <location>
        <begin position="739"/>
        <end position="752"/>
    </location>
</feature>
<feature type="active site" evidence="4">
    <location>
        <position position="430"/>
    </location>
</feature>
<feature type="binding site" evidence="4">
    <location>
        <position position="429"/>
    </location>
    <ligand>
        <name>Zn(2+)</name>
        <dbReference type="ChEBI" id="CHEBI:29105"/>
        <note>catalytic</note>
    </ligand>
</feature>
<feature type="binding site" evidence="4">
    <location>
        <position position="433"/>
    </location>
    <ligand>
        <name>Zn(2+)</name>
        <dbReference type="ChEBI" id="CHEBI:29105"/>
        <note>catalytic</note>
    </ligand>
</feature>
<feature type="binding site" evidence="4">
    <location>
        <position position="439"/>
    </location>
    <ligand>
        <name>Zn(2+)</name>
        <dbReference type="ChEBI" id="CHEBI:29105"/>
        <note>catalytic</note>
    </ligand>
</feature>
<feature type="glycosylation site" description="N-linked (GlcNAc...) asparagine" evidence="2">
    <location>
        <position position="322"/>
    </location>
</feature>
<feature type="glycosylation site" description="N-linked (GlcNAc...) asparagine" evidence="2">
    <location>
        <position position="329"/>
    </location>
</feature>
<feature type="glycosylation site" description="N-linked (GlcNAc...) asparagine" evidence="2">
    <location>
        <position position="355"/>
    </location>
</feature>
<feature type="glycosylation site" description="N-linked (GlcNAc...) asparagine" evidence="2">
    <location>
        <position position="561"/>
    </location>
</feature>
<feature type="glycosylation site" description="N-linked (GlcNAc...) asparagine" evidence="2">
    <location>
        <position position="593"/>
    </location>
</feature>
<feature type="glycosylation site" description="N-linked (GlcNAc...) asparagine" evidence="2">
    <location>
        <position position="640"/>
    </location>
</feature>
<feature type="disulfide bond" evidence="1">
    <location>
        <begin position="398"/>
        <end position="492"/>
    </location>
</feature>
<feature type="disulfide bond" evidence="1">
    <location>
        <begin position="446"/>
        <end position="464"/>
    </location>
</feature>
<feature type="disulfide bond" evidence="1">
    <location>
        <begin position="577"/>
        <end position="597"/>
    </location>
</feature>
<protein>
    <recommendedName>
        <fullName>Disintegrin and metalloproteinase domain-containing protein B</fullName>
        <shortName>ADAM B</shortName>
        <ecNumber>3.4.24.-</ecNumber>
    </recommendedName>
</protein>
<proteinExistence type="inferred from homology"/>
<comment type="function">
    <text evidence="1">Probable zinc protease.</text>
</comment>
<comment type="cofactor">
    <cofactor evidence="1">
        <name>Zn(2+)</name>
        <dbReference type="ChEBI" id="CHEBI:29105"/>
    </cofactor>
    <text evidence="1">Binds 1 zinc ion per subunit.</text>
</comment>
<comment type="subcellular location">
    <subcellularLocation>
        <location>Membrane</location>
        <topology>Single-pass type I membrane protein</topology>
    </subcellularLocation>
</comment>
<comment type="sequence caution" evidence="6">
    <conflict type="erroneous gene model prediction">
        <sequence resource="EMBL-CDS" id="EAL89676"/>
    </conflict>
</comment>
<reference key="1">
    <citation type="journal article" date="2005" name="FEMS Microbiol. Lett.">
        <title>ADAMs are present in fungi: identification of two novel ADAM genes in Aspergillus fumigatus.</title>
        <authorList>
            <person name="Lavens S.E."/>
            <person name="Rovira-Graells N."/>
            <person name="Birch M."/>
            <person name="Tuckwell D."/>
        </authorList>
    </citation>
    <scope>NUCLEOTIDE SEQUENCE [GENOMIC DNA]</scope>
</reference>
<reference key="2">
    <citation type="journal article" date="2005" name="Nature">
        <title>Genomic sequence of the pathogenic and allergenic filamentous fungus Aspergillus fumigatus.</title>
        <authorList>
            <person name="Nierman W.C."/>
            <person name="Pain A."/>
            <person name="Anderson M.J."/>
            <person name="Wortman J.R."/>
            <person name="Kim H.S."/>
            <person name="Arroyo J."/>
            <person name="Berriman M."/>
            <person name="Abe K."/>
            <person name="Archer D.B."/>
            <person name="Bermejo C."/>
            <person name="Bennett J.W."/>
            <person name="Bowyer P."/>
            <person name="Chen D."/>
            <person name="Collins M."/>
            <person name="Coulsen R."/>
            <person name="Davies R."/>
            <person name="Dyer P.S."/>
            <person name="Farman M.L."/>
            <person name="Fedorova N."/>
            <person name="Fedorova N.D."/>
            <person name="Feldblyum T.V."/>
            <person name="Fischer R."/>
            <person name="Fosker N."/>
            <person name="Fraser A."/>
            <person name="Garcia J.L."/>
            <person name="Garcia M.J."/>
            <person name="Goble A."/>
            <person name="Goldman G.H."/>
            <person name="Gomi K."/>
            <person name="Griffith-Jones S."/>
            <person name="Gwilliam R."/>
            <person name="Haas B.J."/>
            <person name="Haas H."/>
            <person name="Harris D.E."/>
            <person name="Horiuchi H."/>
            <person name="Huang J."/>
            <person name="Humphray S."/>
            <person name="Jimenez J."/>
            <person name="Keller N."/>
            <person name="Khouri H."/>
            <person name="Kitamoto K."/>
            <person name="Kobayashi T."/>
            <person name="Konzack S."/>
            <person name="Kulkarni R."/>
            <person name="Kumagai T."/>
            <person name="Lafton A."/>
            <person name="Latge J.-P."/>
            <person name="Li W."/>
            <person name="Lord A."/>
            <person name="Lu C."/>
            <person name="Majoros W.H."/>
            <person name="May G.S."/>
            <person name="Miller B.L."/>
            <person name="Mohamoud Y."/>
            <person name="Molina M."/>
            <person name="Monod M."/>
            <person name="Mouyna I."/>
            <person name="Mulligan S."/>
            <person name="Murphy L.D."/>
            <person name="O'Neil S."/>
            <person name="Paulsen I."/>
            <person name="Penalva M.A."/>
            <person name="Pertea M."/>
            <person name="Price C."/>
            <person name="Pritchard B.L."/>
            <person name="Quail M.A."/>
            <person name="Rabbinowitsch E."/>
            <person name="Rawlins N."/>
            <person name="Rajandream M.A."/>
            <person name="Reichard U."/>
            <person name="Renauld H."/>
            <person name="Robson G.D."/>
            <person name="Rodriguez de Cordoba S."/>
            <person name="Rodriguez-Pena J.M."/>
            <person name="Ronning C.M."/>
            <person name="Rutter S."/>
            <person name="Salzberg S.L."/>
            <person name="Sanchez M."/>
            <person name="Sanchez-Ferrero J.C."/>
            <person name="Saunders D."/>
            <person name="Seeger K."/>
            <person name="Squares R."/>
            <person name="Squares S."/>
            <person name="Takeuchi M."/>
            <person name="Tekaia F."/>
            <person name="Turner G."/>
            <person name="Vazquez de Aldana C.R."/>
            <person name="Weidman J."/>
            <person name="White O."/>
            <person name="Woodward J.R."/>
            <person name="Yu J.-H."/>
            <person name="Fraser C.M."/>
            <person name="Galagan J.E."/>
            <person name="Asai K."/>
            <person name="Machida M."/>
            <person name="Hall N."/>
            <person name="Barrell B.G."/>
            <person name="Denning D.W."/>
        </authorList>
    </citation>
    <scope>NUCLEOTIDE SEQUENCE [LARGE SCALE GENOMIC DNA]</scope>
    <source>
        <strain>ATCC MYA-4609 / CBS 101355 / FGSC A1100 / Af293</strain>
    </source>
</reference>
<dbReference type="EC" id="3.4.24.-"/>
<dbReference type="EMBL" id="AY944632">
    <property type="protein sequence ID" value="AAX47072.1"/>
    <property type="molecule type" value="Genomic_DNA"/>
</dbReference>
<dbReference type="EMBL" id="AAHF01000005">
    <property type="protein sequence ID" value="EAL89676.1"/>
    <property type="status" value="ALT_SEQ"/>
    <property type="molecule type" value="Genomic_DNA"/>
</dbReference>
<dbReference type="RefSeq" id="XP_751714.1">
    <property type="nucleotide sequence ID" value="XM_746621.1"/>
</dbReference>
<dbReference type="SMR" id="Q4WQ08"/>
<dbReference type="GlyCosmos" id="Q4WQ08">
    <property type="glycosylation" value="6 sites, No reported glycans"/>
</dbReference>
<dbReference type="GeneID" id="3509039"/>
<dbReference type="KEGG" id="afm:AFUA_4G11150"/>
<dbReference type="VEuPathDB" id="FungiDB:Afu4g11150"/>
<dbReference type="eggNOG" id="KOG3607">
    <property type="taxonomic scope" value="Eukaryota"/>
</dbReference>
<dbReference type="HOGENOM" id="CLU_012383_1_0_1"/>
<dbReference type="InParanoid" id="Q4WQ08"/>
<dbReference type="OrthoDB" id="5951731at2759"/>
<dbReference type="Proteomes" id="UP000002530">
    <property type="component" value="Chromosome 4"/>
</dbReference>
<dbReference type="GO" id="GO:0016020">
    <property type="term" value="C:membrane"/>
    <property type="evidence" value="ECO:0007669"/>
    <property type="project" value="UniProtKB-SubCell"/>
</dbReference>
<dbReference type="GO" id="GO:0046872">
    <property type="term" value="F:metal ion binding"/>
    <property type="evidence" value="ECO:0007669"/>
    <property type="project" value="UniProtKB-KW"/>
</dbReference>
<dbReference type="GO" id="GO:0004222">
    <property type="term" value="F:metalloendopeptidase activity"/>
    <property type="evidence" value="ECO:0000318"/>
    <property type="project" value="GO_Central"/>
</dbReference>
<dbReference type="GO" id="GO:0008237">
    <property type="term" value="F:metallopeptidase activity"/>
    <property type="evidence" value="ECO:0000314"/>
    <property type="project" value="AspGD"/>
</dbReference>
<dbReference type="GO" id="GO:0006508">
    <property type="term" value="P:proteolysis"/>
    <property type="evidence" value="ECO:0000318"/>
    <property type="project" value="GO_Central"/>
</dbReference>
<dbReference type="CDD" id="cd04271">
    <property type="entry name" value="ZnMc_ADAM_fungal"/>
    <property type="match status" value="1"/>
</dbReference>
<dbReference type="FunFam" id="4.10.70.10:FF:000001">
    <property type="entry name" value="Disintegrin and metalloproteinase domain-containing protein 22"/>
    <property type="match status" value="1"/>
</dbReference>
<dbReference type="FunFam" id="3.40.390.10:FF:000093">
    <property type="entry name" value="Disintegrin and metalloproteinase domain-containing protein B"/>
    <property type="match status" value="1"/>
</dbReference>
<dbReference type="Gene3D" id="3.40.1620.60">
    <property type="match status" value="1"/>
</dbReference>
<dbReference type="Gene3D" id="3.40.390.10">
    <property type="entry name" value="Collagenase (Catalytic Domain)"/>
    <property type="match status" value="1"/>
</dbReference>
<dbReference type="Gene3D" id="4.10.70.10">
    <property type="entry name" value="Disintegrin domain"/>
    <property type="match status" value="1"/>
</dbReference>
<dbReference type="InterPro" id="IPR006586">
    <property type="entry name" value="ADAM_Cys-rich"/>
</dbReference>
<dbReference type="InterPro" id="IPR041645">
    <property type="entry name" value="ADAMTS_CR_2"/>
</dbReference>
<dbReference type="InterPro" id="IPR001762">
    <property type="entry name" value="Disintegrin_dom"/>
</dbReference>
<dbReference type="InterPro" id="IPR036436">
    <property type="entry name" value="Disintegrin_dom_sf"/>
</dbReference>
<dbReference type="InterPro" id="IPR024079">
    <property type="entry name" value="MetalloPept_cat_dom_sf"/>
</dbReference>
<dbReference type="InterPro" id="IPR001590">
    <property type="entry name" value="Peptidase_M12B"/>
</dbReference>
<dbReference type="InterPro" id="IPR034028">
    <property type="entry name" value="ZnMc_ADAM_fungal"/>
</dbReference>
<dbReference type="PANTHER" id="PTHR11905">
    <property type="entry name" value="ADAM A DISINTEGRIN AND METALLOPROTEASE DOMAIN"/>
    <property type="match status" value="1"/>
</dbReference>
<dbReference type="PANTHER" id="PTHR11905:SF159">
    <property type="entry name" value="ADAM METALLOPROTEASE"/>
    <property type="match status" value="1"/>
</dbReference>
<dbReference type="Pfam" id="PF17771">
    <property type="entry name" value="ADAMTS_CR_2"/>
    <property type="match status" value="1"/>
</dbReference>
<dbReference type="Pfam" id="PF00200">
    <property type="entry name" value="Disintegrin"/>
    <property type="match status" value="1"/>
</dbReference>
<dbReference type="Pfam" id="PF13688">
    <property type="entry name" value="Reprolysin_5"/>
    <property type="match status" value="1"/>
</dbReference>
<dbReference type="PRINTS" id="PR00289">
    <property type="entry name" value="DISINTEGRIN"/>
</dbReference>
<dbReference type="SMART" id="SM00608">
    <property type="entry name" value="ACR"/>
    <property type="match status" value="1"/>
</dbReference>
<dbReference type="SMART" id="SM00050">
    <property type="entry name" value="DISIN"/>
    <property type="match status" value="1"/>
</dbReference>
<dbReference type="SUPFAM" id="SSF57552">
    <property type="entry name" value="Blood coagulation inhibitor (disintegrin)"/>
    <property type="match status" value="1"/>
</dbReference>
<dbReference type="SUPFAM" id="SSF55486">
    <property type="entry name" value="Metalloproteases ('zincins'), catalytic domain"/>
    <property type="match status" value="1"/>
</dbReference>
<dbReference type="PROSITE" id="PS50215">
    <property type="entry name" value="ADAM_MEPRO"/>
    <property type="match status" value="1"/>
</dbReference>
<dbReference type="PROSITE" id="PS50214">
    <property type="entry name" value="DISINTEGRIN_2"/>
    <property type="match status" value="1"/>
</dbReference>
<name>ADMB_ASPFU</name>
<evidence type="ECO:0000250" key="1"/>
<evidence type="ECO:0000255" key="2"/>
<evidence type="ECO:0000255" key="3">
    <source>
        <dbReference type="PROSITE-ProRule" id="PRU00068"/>
    </source>
</evidence>
<evidence type="ECO:0000255" key="4">
    <source>
        <dbReference type="PROSITE-ProRule" id="PRU00276"/>
    </source>
</evidence>
<evidence type="ECO:0000256" key="5">
    <source>
        <dbReference type="SAM" id="MobiDB-lite"/>
    </source>
</evidence>
<evidence type="ECO:0000305" key="6"/>
<organism>
    <name type="scientific">Aspergillus fumigatus (strain ATCC MYA-4609 / CBS 101355 / FGSC A1100 / Af293)</name>
    <name type="common">Neosartorya fumigata</name>
    <dbReference type="NCBI Taxonomy" id="330879"/>
    <lineage>
        <taxon>Eukaryota</taxon>
        <taxon>Fungi</taxon>
        <taxon>Dikarya</taxon>
        <taxon>Ascomycota</taxon>
        <taxon>Pezizomycotina</taxon>
        <taxon>Eurotiomycetes</taxon>
        <taxon>Eurotiomycetidae</taxon>
        <taxon>Eurotiales</taxon>
        <taxon>Aspergillaceae</taxon>
        <taxon>Aspergillus</taxon>
        <taxon>Aspergillus subgen. Fumigati</taxon>
    </lineage>
</organism>
<accession>Q4WQ08</accession>
<accession>Q58I95</accession>
<sequence length="785" mass="85082">MRFLKSALPFVASALSLLSVQAAARSQEPSAIQHVSILEHAVINTPSHEVDHLTDFDVTFELPDKHQTIKLELEPNHDILADDAYVQYLDAEGNVHREEPIQRHEHKVFKGRSLLRRDNGLWRPVGWARVYVQRDGSKPLFEGVFSIDNDNHHVELKSTYLQKKRVEDASIPDRKDEYMVVYRDSDMIRQVRSELKRSLISSSSCQAEKLGFNSDPQHPIFRSEFQDMDLGMSSYGSMSLNSLFGLSKRQSDIGGVSGNAGGVNLAQTIGSTSGCPKTKQVALVGIAADCSFRASFDNDDAAKQWIINMVNSASDVYEKSFNISIGLRNLTMTDKTCPETAPASTQWNMPCDQSNITQRLNLFSQWRGQQSDDNAYWTLMSNCPTGSEVGLAWLGQLCNTEVTGDGSNSVSGTNVVVRVSGGGWQVFAHESGHTFGAVHDCDSMTCAQNLEASSQCCPYNRGTCDANGKYIMNPSTGADITAFSPCTIGNICSALGRNSVKSSCLSDNRNVVTYTGSQCGNGIVEAGEDCDCGGESSCGDNPCCDAKTCKFKSGAVCDDANDSCCSQCQFSPAGTVCRASLGECDLQETCTGNSSTCPADSFKKDGEKCGDTSGLTCASGQCTSRDYQCRTVMGSLIHDNNTYACPQFDSSCELICTSPSLGSCFSINQNFLDGTPCGSGGYCHNGRCDGSNFGSWVEQHKNLVIGVACGVGGLLVLSILWCMINRCRRARTVVKRPPMRPWPGPMPPPPPQMGQWAGPNRGYQGLRAEPPPPYPGPYQSATRYA</sequence>
<gene>
    <name type="primary">ADM-B</name>
    <name type="ORF">AFUA_4G11150</name>
</gene>
<keyword id="KW-1015">Disulfide bond</keyword>
<keyword id="KW-0325">Glycoprotein</keyword>
<keyword id="KW-0378">Hydrolase</keyword>
<keyword id="KW-0472">Membrane</keyword>
<keyword id="KW-0479">Metal-binding</keyword>
<keyword id="KW-0482">Metalloprotease</keyword>
<keyword id="KW-0645">Protease</keyword>
<keyword id="KW-1185">Reference proteome</keyword>
<keyword id="KW-0732">Signal</keyword>
<keyword id="KW-0812">Transmembrane</keyword>
<keyword id="KW-1133">Transmembrane helix</keyword>
<keyword id="KW-0862">Zinc</keyword>